<proteinExistence type="inferred from homology"/>
<gene>
    <name evidence="1" type="primary">rplW</name>
    <name type="ordered locus">mma_3409</name>
</gene>
<reference key="1">
    <citation type="journal article" date="2007" name="PLoS Genet.">
        <title>Genome analysis of Minibacterium massiliensis highlights the convergent evolution of water-living bacteria.</title>
        <authorList>
            <person name="Audic S."/>
            <person name="Robert C."/>
            <person name="Campagna B."/>
            <person name="Parinello H."/>
            <person name="Claverie J.-M."/>
            <person name="Raoult D."/>
            <person name="Drancourt M."/>
        </authorList>
    </citation>
    <scope>NUCLEOTIDE SEQUENCE [LARGE SCALE GENOMIC DNA]</scope>
    <source>
        <strain>Marseille</strain>
    </source>
</reference>
<comment type="function">
    <text evidence="1">One of the early assembly proteins it binds 23S rRNA. One of the proteins that surrounds the polypeptide exit tunnel on the outside of the ribosome. Forms the main docking site for trigger factor binding to the ribosome.</text>
</comment>
<comment type="subunit">
    <text evidence="1">Part of the 50S ribosomal subunit. Contacts protein L29, and trigger factor when it is bound to the ribosome.</text>
</comment>
<comment type="similarity">
    <text evidence="1">Belongs to the universal ribosomal protein uL23 family.</text>
</comment>
<feature type="chain" id="PRO_1000087221" description="Large ribosomal subunit protein uL23">
    <location>
        <begin position="1"/>
        <end position="105"/>
    </location>
</feature>
<keyword id="KW-0687">Ribonucleoprotein</keyword>
<keyword id="KW-0689">Ribosomal protein</keyword>
<keyword id="KW-0694">RNA-binding</keyword>
<keyword id="KW-0699">rRNA-binding</keyword>
<dbReference type="EMBL" id="CP000269">
    <property type="protein sequence ID" value="ABR88667.1"/>
    <property type="molecule type" value="Genomic_DNA"/>
</dbReference>
<dbReference type="RefSeq" id="WP_012081247.1">
    <property type="nucleotide sequence ID" value="NC_009659.1"/>
</dbReference>
<dbReference type="SMR" id="A6T3K2"/>
<dbReference type="STRING" id="375286.mma_3409"/>
<dbReference type="KEGG" id="mms:mma_3409"/>
<dbReference type="eggNOG" id="COG0089">
    <property type="taxonomic scope" value="Bacteria"/>
</dbReference>
<dbReference type="HOGENOM" id="CLU_037562_3_1_4"/>
<dbReference type="OrthoDB" id="9793353at2"/>
<dbReference type="Proteomes" id="UP000006388">
    <property type="component" value="Chromosome"/>
</dbReference>
<dbReference type="GO" id="GO:1990904">
    <property type="term" value="C:ribonucleoprotein complex"/>
    <property type="evidence" value="ECO:0007669"/>
    <property type="project" value="UniProtKB-KW"/>
</dbReference>
<dbReference type="GO" id="GO:0005840">
    <property type="term" value="C:ribosome"/>
    <property type="evidence" value="ECO:0007669"/>
    <property type="project" value="UniProtKB-KW"/>
</dbReference>
<dbReference type="GO" id="GO:0019843">
    <property type="term" value="F:rRNA binding"/>
    <property type="evidence" value="ECO:0007669"/>
    <property type="project" value="UniProtKB-UniRule"/>
</dbReference>
<dbReference type="GO" id="GO:0003735">
    <property type="term" value="F:structural constituent of ribosome"/>
    <property type="evidence" value="ECO:0007669"/>
    <property type="project" value="InterPro"/>
</dbReference>
<dbReference type="GO" id="GO:0006412">
    <property type="term" value="P:translation"/>
    <property type="evidence" value="ECO:0007669"/>
    <property type="project" value="UniProtKB-UniRule"/>
</dbReference>
<dbReference type="FunFam" id="3.30.70.330:FF:000001">
    <property type="entry name" value="50S ribosomal protein L23"/>
    <property type="match status" value="1"/>
</dbReference>
<dbReference type="Gene3D" id="3.30.70.330">
    <property type="match status" value="1"/>
</dbReference>
<dbReference type="HAMAP" id="MF_01369_B">
    <property type="entry name" value="Ribosomal_uL23_B"/>
    <property type="match status" value="1"/>
</dbReference>
<dbReference type="InterPro" id="IPR012677">
    <property type="entry name" value="Nucleotide-bd_a/b_plait_sf"/>
</dbReference>
<dbReference type="InterPro" id="IPR013025">
    <property type="entry name" value="Ribosomal_uL23-like"/>
</dbReference>
<dbReference type="InterPro" id="IPR012678">
    <property type="entry name" value="Ribosomal_uL23/eL15/eS24_sf"/>
</dbReference>
<dbReference type="NCBIfam" id="NF004359">
    <property type="entry name" value="PRK05738.1-3"/>
    <property type="match status" value="1"/>
</dbReference>
<dbReference type="NCBIfam" id="NF004363">
    <property type="entry name" value="PRK05738.2-4"/>
    <property type="match status" value="1"/>
</dbReference>
<dbReference type="PANTHER" id="PTHR11620">
    <property type="entry name" value="60S RIBOSOMAL PROTEIN L23A"/>
    <property type="match status" value="1"/>
</dbReference>
<dbReference type="Pfam" id="PF00276">
    <property type="entry name" value="Ribosomal_L23"/>
    <property type="match status" value="1"/>
</dbReference>
<dbReference type="SUPFAM" id="SSF54189">
    <property type="entry name" value="Ribosomal proteins S24e, L23 and L15e"/>
    <property type="match status" value="1"/>
</dbReference>
<accession>A6T3K2</accession>
<sequence>MSAILKHSEERLMKVLLAPVISEKATFVAEKNEQVVFLVMPDATKPEIKAAVELLFKVQVESVQVANRQGKQKRSGRFNGRRNHTRRAFVCLKPGQEINFTEEAK</sequence>
<protein>
    <recommendedName>
        <fullName evidence="1">Large ribosomal subunit protein uL23</fullName>
    </recommendedName>
    <alternativeName>
        <fullName evidence="2">50S ribosomal protein L23</fullName>
    </alternativeName>
</protein>
<evidence type="ECO:0000255" key="1">
    <source>
        <dbReference type="HAMAP-Rule" id="MF_01369"/>
    </source>
</evidence>
<evidence type="ECO:0000305" key="2"/>
<name>RL23_JANMA</name>
<organism>
    <name type="scientific">Janthinobacterium sp. (strain Marseille)</name>
    <name type="common">Minibacterium massiliensis</name>
    <dbReference type="NCBI Taxonomy" id="375286"/>
    <lineage>
        <taxon>Bacteria</taxon>
        <taxon>Pseudomonadati</taxon>
        <taxon>Pseudomonadota</taxon>
        <taxon>Betaproteobacteria</taxon>
        <taxon>Burkholderiales</taxon>
        <taxon>Oxalobacteraceae</taxon>
        <taxon>Janthinobacterium</taxon>
    </lineage>
</organism>